<protein>
    <recommendedName>
        <fullName evidence="1">Isopentenyl-diphosphate delta-isomerase</fullName>
        <shortName evidence="1">IPP isomerase</shortName>
        <ecNumber evidence="1">5.3.3.2</ecNumber>
    </recommendedName>
    <alternativeName>
        <fullName evidence="1">Isopentenyl diphosphate:dimethylallyl diphosphate isomerase</fullName>
    </alternativeName>
    <alternativeName>
        <fullName evidence="1">Isopentenyl pyrophosphate isomerase</fullName>
    </alternativeName>
    <alternativeName>
        <fullName evidence="1">Type 2 isopentenyl diphosphate isomerase</fullName>
        <shortName evidence="1">IDI-2</shortName>
    </alternativeName>
</protein>
<comment type="function">
    <text evidence="1">Involved in the biosynthesis of isoprenoids. Catalyzes the 1,3-allylic rearrangement of the homoallylic substrate isopentenyl (IPP) to its allylic isomer, dimethylallyl diphosphate (DMAPP).</text>
</comment>
<comment type="catalytic activity">
    <reaction evidence="1">
        <text>isopentenyl diphosphate = dimethylallyl diphosphate</text>
        <dbReference type="Rhea" id="RHEA:23284"/>
        <dbReference type="ChEBI" id="CHEBI:57623"/>
        <dbReference type="ChEBI" id="CHEBI:128769"/>
        <dbReference type="EC" id="5.3.3.2"/>
    </reaction>
</comment>
<comment type="cofactor">
    <cofactor evidence="1">
        <name>FMN</name>
        <dbReference type="ChEBI" id="CHEBI:58210"/>
    </cofactor>
</comment>
<comment type="cofactor">
    <cofactor evidence="1">
        <name>NADPH</name>
        <dbReference type="ChEBI" id="CHEBI:57783"/>
    </cofactor>
</comment>
<comment type="cofactor">
    <cofactor evidence="1">
        <name>Mg(2+)</name>
        <dbReference type="ChEBI" id="CHEBI:18420"/>
    </cofactor>
</comment>
<comment type="subunit">
    <text evidence="1">Homooctamer. Dimer of tetramers.</text>
</comment>
<comment type="subcellular location">
    <subcellularLocation>
        <location evidence="1">Cytoplasm</location>
    </subcellularLocation>
</comment>
<comment type="similarity">
    <text evidence="1">Belongs to the IPP isomerase type 2 family.</text>
</comment>
<accession>A1BDG7</accession>
<dbReference type="EC" id="5.3.3.2" evidence="1"/>
<dbReference type="EMBL" id="CP000492">
    <property type="protein sequence ID" value="ABL64444.1"/>
    <property type="molecule type" value="Genomic_DNA"/>
</dbReference>
<dbReference type="RefSeq" id="WP_011744277.1">
    <property type="nucleotide sequence ID" value="NC_008639.1"/>
</dbReference>
<dbReference type="SMR" id="A1BDG7"/>
<dbReference type="STRING" id="290317.Cpha266_0385"/>
<dbReference type="KEGG" id="cph:Cpha266_0385"/>
<dbReference type="eggNOG" id="COG1304">
    <property type="taxonomic scope" value="Bacteria"/>
</dbReference>
<dbReference type="HOGENOM" id="CLU_065515_1_0_10"/>
<dbReference type="OrthoDB" id="9795032at2"/>
<dbReference type="Proteomes" id="UP000008701">
    <property type="component" value="Chromosome"/>
</dbReference>
<dbReference type="GO" id="GO:0005737">
    <property type="term" value="C:cytoplasm"/>
    <property type="evidence" value="ECO:0007669"/>
    <property type="project" value="UniProtKB-SubCell"/>
</dbReference>
<dbReference type="GO" id="GO:0010181">
    <property type="term" value="F:FMN binding"/>
    <property type="evidence" value="ECO:0007669"/>
    <property type="project" value="UniProtKB-UniRule"/>
</dbReference>
<dbReference type="GO" id="GO:0004452">
    <property type="term" value="F:isopentenyl-diphosphate delta-isomerase activity"/>
    <property type="evidence" value="ECO:0007669"/>
    <property type="project" value="UniProtKB-UniRule"/>
</dbReference>
<dbReference type="GO" id="GO:0000287">
    <property type="term" value="F:magnesium ion binding"/>
    <property type="evidence" value="ECO:0007669"/>
    <property type="project" value="UniProtKB-UniRule"/>
</dbReference>
<dbReference type="GO" id="GO:0070402">
    <property type="term" value="F:NADPH binding"/>
    <property type="evidence" value="ECO:0007669"/>
    <property type="project" value="UniProtKB-UniRule"/>
</dbReference>
<dbReference type="GO" id="GO:0016491">
    <property type="term" value="F:oxidoreductase activity"/>
    <property type="evidence" value="ECO:0007669"/>
    <property type="project" value="InterPro"/>
</dbReference>
<dbReference type="GO" id="GO:0008299">
    <property type="term" value="P:isoprenoid biosynthetic process"/>
    <property type="evidence" value="ECO:0007669"/>
    <property type="project" value="UniProtKB-UniRule"/>
</dbReference>
<dbReference type="CDD" id="cd02811">
    <property type="entry name" value="IDI-2_FMN"/>
    <property type="match status" value="1"/>
</dbReference>
<dbReference type="Gene3D" id="3.20.20.70">
    <property type="entry name" value="Aldolase class I"/>
    <property type="match status" value="1"/>
</dbReference>
<dbReference type="HAMAP" id="MF_00354">
    <property type="entry name" value="Idi_2"/>
    <property type="match status" value="1"/>
</dbReference>
<dbReference type="InterPro" id="IPR013785">
    <property type="entry name" value="Aldolase_TIM"/>
</dbReference>
<dbReference type="InterPro" id="IPR000262">
    <property type="entry name" value="FMN-dep_DH"/>
</dbReference>
<dbReference type="InterPro" id="IPR011179">
    <property type="entry name" value="IPdP_isomerase"/>
</dbReference>
<dbReference type="NCBIfam" id="TIGR02151">
    <property type="entry name" value="IPP_isom_2"/>
    <property type="match status" value="1"/>
</dbReference>
<dbReference type="PANTHER" id="PTHR43665">
    <property type="entry name" value="ISOPENTENYL-DIPHOSPHATE DELTA-ISOMERASE"/>
    <property type="match status" value="1"/>
</dbReference>
<dbReference type="PANTHER" id="PTHR43665:SF1">
    <property type="entry name" value="ISOPENTENYL-DIPHOSPHATE DELTA-ISOMERASE"/>
    <property type="match status" value="1"/>
</dbReference>
<dbReference type="Pfam" id="PF01070">
    <property type="entry name" value="FMN_dh"/>
    <property type="match status" value="1"/>
</dbReference>
<dbReference type="PIRSF" id="PIRSF003314">
    <property type="entry name" value="IPP_isomerase"/>
    <property type="match status" value="1"/>
</dbReference>
<dbReference type="SMART" id="SM01240">
    <property type="entry name" value="IMPDH"/>
    <property type="match status" value="1"/>
</dbReference>
<dbReference type="SUPFAM" id="SSF51395">
    <property type="entry name" value="FMN-linked oxidoreductases"/>
    <property type="match status" value="1"/>
</dbReference>
<keyword id="KW-0963">Cytoplasm</keyword>
<keyword id="KW-0285">Flavoprotein</keyword>
<keyword id="KW-0288">FMN</keyword>
<keyword id="KW-0413">Isomerase</keyword>
<keyword id="KW-0414">Isoprene biosynthesis</keyword>
<keyword id="KW-0460">Magnesium</keyword>
<keyword id="KW-0479">Metal-binding</keyword>
<keyword id="KW-0521">NADP</keyword>
<keyword id="KW-1185">Reference proteome</keyword>
<name>IDI2_CHLPD</name>
<gene>
    <name evidence="1" type="primary">fni</name>
    <name type="ordered locus">Cpha266_0385</name>
</gene>
<proteinExistence type="inferred from homology"/>
<evidence type="ECO:0000255" key="1">
    <source>
        <dbReference type="HAMAP-Rule" id="MF_00354"/>
    </source>
</evidence>
<reference key="1">
    <citation type="submission" date="2006-12" db="EMBL/GenBank/DDBJ databases">
        <title>Complete sequence of Chlorobium phaeobacteroides DSM 266.</title>
        <authorList>
            <consortium name="US DOE Joint Genome Institute"/>
            <person name="Copeland A."/>
            <person name="Lucas S."/>
            <person name="Lapidus A."/>
            <person name="Barry K."/>
            <person name="Detter J.C."/>
            <person name="Glavina del Rio T."/>
            <person name="Hammon N."/>
            <person name="Israni S."/>
            <person name="Pitluck S."/>
            <person name="Goltsman E."/>
            <person name="Schmutz J."/>
            <person name="Larimer F."/>
            <person name="Land M."/>
            <person name="Hauser L."/>
            <person name="Mikhailova N."/>
            <person name="Li T."/>
            <person name="Overmann J."/>
            <person name="Bryant D.A."/>
            <person name="Richardson P."/>
        </authorList>
    </citation>
    <scope>NUCLEOTIDE SEQUENCE [LARGE SCALE GENOMIC DNA]</scope>
    <source>
        <strain>DSM 266 / SMG 266 / 2430</strain>
    </source>
</reference>
<feature type="chain" id="PRO_1000048436" description="Isopentenyl-diphosphate delta-isomerase">
    <location>
        <begin position="1"/>
        <end position="363"/>
    </location>
</feature>
<feature type="binding site" evidence="1">
    <location>
        <begin position="15"/>
        <end position="16"/>
    </location>
    <ligand>
        <name>substrate</name>
    </ligand>
</feature>
<feature type="binding site" evidence="1">
    <location>
        <position position="73"/>
    </location>
    <ligand>
        <name>FMN</name>
        <dbReference type="ChEBI" id="CHEBI:58210"/>
    </ligand>
</feature>
<feature type="binding site" evidence="1">
    <location>
        <begin position="74"/>
        <end position="76"/>
    </location>
    <ligand>
        <name>FMN</name>
        <dbReference type="ChEBI" id="CHEBI:58210"/>
    </ligand>
</feature>
<feature type="binding site" evidence="1">
    <location>
        <begin position="104"/>
        <end position="106"/>
    </location>
    <ligand>
        <name>substrate</name>
    </ligand>
</feature>
<feature type="binding site" evidence="1">
    <location>
        <position position="104"/>
    </location>
    <ligand>
        <name>FMN</name>
        <dbReference type="ChEBI" id="CHEBI:58210"/>
    </ligand>
</feature>
<feature type="binding site" evidence="1">
    <location>
        <position position="133"/>
    </location>
    <ligand>
        <name>FMN</name>
        <dbReference type="ChEBI" id="CHEBI:58210"/>
    </ligand>
</feature>
<feature type="binding site" evidence="1">
    <location>
        <position position="168"/>
    </location>
    <ligand>
        <name>substrate</name>
    </ligand>
</feature>
<feature type="binding site" evidence="1">
    <location>
        <position position="169"/>
    </location>
    <ligand>
        <name>Mg(2+)</name>
        <dbReference type="ChEBI" id="CHEBI:18420"/>
    </ligand>
</feature>
<feature type="binding site" evidence="1">
    <location>
        <position position="200"/>
    </location>
    <ligand>
        <name>FMN</name>
        <dbReference type="ChEBI" id="CHEBI:58210"/>
    </ligand>
</feature>
<feature type="binding site" evidence="1">
    <location>
        <position position="230"/>
    </location>
    <ligand>
        <name>FMN</name>
        <dbReference type="ChEBI" id="CHEBI:58210"/>
    </ligand>
</feature>
<feature type="binding site" evidence="1">
    <location>
        <begin position="313"/>
        <end position="314"/>
    </location>
    <ligand>
        <name>FMN</name>
        <dbReference type="ChEBI" id="CHEBI:58210"/>
    </ligand>
</feature>
<sequence>MNEKLSTPSNITIERKLNHVEICLHGNVSFEGTTTGLERYAIEHQAVPEINYADINLSATLLGRTIGAPLMISSMTGGYHEAATLNRQFAQAAEHFRIPLGVGSMRQALENNEHRESFAVVRKAAPSVPVFANIGAPEVAAGLESSQIETMLDLIQADGLIVHLNAAQELFQPEGNTNFHGFLDQLASLTAKTPVPVIAKEVGSGISAEAARLLIDAGVKVIDVAGAGGTSWQKVEEVRYIKRFGNENRFSPEALNELLNWGIPTATCLEEIGRLKKNHPQYQPIEIIASGGIQSGIDVAKTILLGASVAASAGRLLKALHEGKLLQTIEMWLNDLKAVMFLTGSLSLEQLQKKRMTLKHLPT</sequence>
<organism>
    <name type="scientific">Chlorobium phaeobacteroides (strain DSM 266 / SMG 266 / 2430)</name>
    <dbReference type="NCBI Taxonomy" id="290317"/>
    <lineage>
        <taxon>Bacteria</taxon>
        <taxon>Pseudomonadati</taxon>
        <taxon>Chlorobiota</taxon>
        <taxon>Chlorobiia</taxon>
        <taxon>Chlorobiales</taxon>
        <taxon>Chlorobiaceae</taxon>
        <taxon>Chlorobium/Pelodictyon group</taxon>
        <taxon>Chlorobium</taxon>
    </lineage>
</organism>